<gene>
    <name type="ordered locus">RL0614</name>
</gene>
<protein>
    <recommendedName>
        <fullName evidence="1">UPF0262 protein RL0614</fullName>
    </recommendedName>
</protein>
<organism>
    <name type="scientific">Rhizobium johnstonii (strain DSM 114642 / LMG 32736 / 3841)</name>
    <name type="common">Rhizobium leguminosarum bv. viciae</name>
    <dbReference type="NCBI Taxonomy" id="216596"/>
    <lineage>
        <taxon>Bacteria</taxon>
        <taxon>Pseudomonadati</taxon>
        <taxon>Pseudomonadota</taxon>
        <taxon>Alphaproteobacteria</taxon>
        <taxon>Hyphomicrobiales</taxon>
        <taxon>Rhizobiaceae</taxon>
        <taxon>Rhizobium/Agrobacterium group</taxon>
        <taxon>Rhizobium</taxon>
        <taxon>Rhizobium johnstonii</taxon>
    </lineage>
</organism>
<name>Y614_RHIJ3</name>
<sequence>MAKGEFRLCDVVLDDTIGRSTPDVEHERAVAIFDLIEENRFEPLGHAGGPYRLNISLVDSKLVFAITTEEGGGVATHILSLTPFRRIVKDYFMICESYYEAIRSSTPSRIEAIDMGRRGIHNEGSQTLKDRLAGKIEVDFDTARRLFTLVCVLYWRG</sequence>
<proteinExistence type="inferred from homology"/>
<accession>Q1MLP5</accession>
<feature type="chain" id="PRO_0000314206" description="UPF0262 protein RL0614">
    <location>
        <begin position="1"/>
        <end position="157"/>
    </location>
</feature>
<comment type="similarity">
    <text evidence="1">Belongs to the UPF0262 family.</text>
</comment>
<evidence type="ECO:0000255" key="1">
    <source>
        <dbReference type="HAMAP-Rule" id="MF_00678"/>
    </source>
</evidence>
<dbReference type="EMBL" id="AM236080">
    <property type="protein sequence ID" value="CAK06108.1"/>
    <property type="molecule type" value="Genomic_DNA"/>
</dbReference>
<dbReference type="RefSeq" id="WP_011650397.1">
    <property type="nucleotide sequence ID" value="NC_008380.1"/>
</dbReference>
<dbReference type="EnsemblBacteria" id="CAK06108">
    <property type="protein sequence ID" value="CAK06108"/>
    <property type="gene ID" value="RL0614"/>
</dbReference>
<dbReference type="KEGG" id="rle:RL0614"/>
<dbReference type="eggNOG" id="COG5328">
    <property type="taxonomic scope" value="Bacteria"/>
</dbReference>
<dbReference type="HOGENOM" id="CLU_112904_0_0_5"/>
<dbReference type="Proteomes" id="UP000006575">
    <property type="component" value="Chromosome"/>
</dbReference>
<dbReference type="HAMAP" id="MF_00678">
    <property type="entry name" value="UPF0262"/>
    <property type="match status" value="1"/>
</dbReference>
<dbReference type="InterPro" id="IPR008321">
    <property type="entry name" value="UCP032146"/>
</dbReference>
<dbReference type="NCBIfam" id="NF002769">
    <property type="entry name" value="PRK02853.1"/>
    <property type="match status" value="1"/>
</dbReference>
<dbReference type="Pfam" id="PF06793">
    <property type="entry name" value="UPF0262"/>
    <property type="match status" value="1"/>
</dbReference>
<dbReference type="PIRSF" id="PIRSF032146">
    <property type="entry name" value="UCP032146"/>
    <property type="match status" value="1"/>
</dbReference>
<reference key="1">
    <citation type="journal article" date="2006" name="Genome Biol.">
        <title>The genome of Rhizobium leguminosarum has recognizable core and accessory components.</title>
        <authorList>
            <person name="Young J.P.W."/>
            <person name="Crossman L.C."/>
            <person name="Johnston A.W.B."/>
            <person name="Thomson N.R."/>
            <person name="Ghazoui Z.F."/>
            <person name="Hull K.H."/>
            <person name="Wexler M."/>
            <person name="Curson A.R.J."/>
            <person name="Todd J.D."/>
            <person name="Poole P.S."/>
            <person name="Mauchline T.H."/>
            <person name="East A.K."/>
            <person name="Quail M.A."/>
            <person name="Churcher C."/>
            <person name="Arrowsmith C."/>
            <person name="Cherevach I."/>
            <person name="Chillingworth T."/>
            <person name="Clarke K."/>
            <person name="Cronin A."/>
            <person name="Davis P."/>
            <person name="Fraser A."/>
            <person name="Hance Z."/>
            <person name="Hauser H."/>
            <person name="Jagels K."/>
            <person name="Moule S."/>
            <person name="Mungall K."/>
            <person name="Norbertczak H."/>
            <person name="Rabbinowitsch E."/>
            <person name="Sanders M."/>
            <person name="Simmonds M."/>
            <person name="Whitehead S."/>
            <person name="Parkhill J."/>
        </authorList>
    </citation>
    <scope>NUCLEOTIDE SEQUENCE [LARGE SCALE GENOMIC DNA]</scope>
    <source>
        <strain>DSM 114642 / LMG 32736 / 3841</strain>
    </source>
</reference>